<protein>
    <recommendedName>
        <fullName evidence="4">Toxin BMLCL</fullName>
    </recommendedName>
    <alternativeName>
        <fullName evidence="5">BM8</fullName>
    </alternativeName>
</protein>
<proteinExistence type="evidence at protein level"/>
<name>3NOH_BUNMU</name>
<reference key="1">
    <citation type="journal article" date="1999" name="Biosci. Biotechnol. Biochem.">
        <title>cDNA sequence analysis of a novel member of the three loop protein family from the Chinese continental banded krait.</title>
        <authorList>
            <person name="Qian Y.-C."/>
            <person name="Fan C.-Y."/>
            <person name="Gong Y."/>
            <person name="Yang S.-L."/>
        </authorList>
    </citation>
    <scope>NUCLEOTIDE SEQUENCE [MRNA]</scope>
    <source>
        <tissue>Venom gland</tissue>
    </source>
</reference>
<reference key="2">
    <citation type="journal article" date="2002" name="Biol. Chem.">
        <title>Muscarinic toxin-like proteins from Taiwan banded krait (Bungarus multicinctus) venom: purification, characterization and gene organization.</title>
        <authorList>
            <person name="Chung C."/>
            <person name="Wu B.N."/>
            <person name="Yang C.C."/>
            <person name="Chang L.S."/>
        </authorList>
    </citation>
    <scope>PROTEIN SEQUENCE OF 22-103</scope>
    <scope>MASS SPECTROMETRY</scope>
    <scope>SUBCELLULAR LOCATION</scope>
    <source>
        <tissue>Venom</tissue>
    </source>
</reference>
<reference key="3">
    <citation type="journal article" date="2015" name="Dokl. Biochem. Biophys.">
        <title>Nonconventional three-finger toxin BMLCL from krait Bungarus multicinctus venom with high affinity interacts with nicotinic acetylcholine receptors.</title>
        <authorList>
            <person name="Utkin Y.N."/>
            <person name="Kasheverov I.E."/>
            <person name="Kudryavtsev D.S."/>
            <person name="Andreeva T.V."/>
            <person name="Starkov V.G."/>
            <person name="Ziganshin R.H."/>
            <person name="Kuznetsov D.V."/>
            <person name="Anh H.N."/>
            <person name="Thao N.T."/>
            <person name="Khoa N.C."/>
            <person name="Tsetlin V.I."/>
        </authorList>
    </citation>
    <scope>FUNCTION</scope>
    <scope>IDENTIFICATION BY MASS SPECTROMETRY</scope>
    <source>
        <tissue>Venom</tissue>
    </source>
</reference>
<keyword id="KW-0008">Acetylcholine receptor inhibiting toxin</keyword>
<keyword id="KW-0903">Direct protein sequencing</keyword>
<keyword id="KW-1015">Disulfide bond</keyword>
<keyword id="KW-0528">Neurotoxin</keyword>
<keyword id="KW-0629">Postsynaptic neurotoxin</keyword>
<keyword id="KW-0964">Secreted</keyword>
<keyword id="KW-0732">Signal</keyword>
<keyword id="KW-0800">Toxin</keyword>
<dbReference type="EMBL" id="AJ007741">
    <property type="protein sequence ID" value="CAB53358.1"/>
    <property type="molecule type" value="mRNA"/>
</dbReference>
<dbReference type="SMR" id="Q9PW19"/>
<dbReference type="GO" id="GO:0005576">
    <property type="term" value="C:extracellular region"/>
    <property type="evidence" value="ECO:0007669"/>
    <property type="project" value="UniProtKB-SubCell"/>
</dbReference>
<dbReference type="GO" id="GO:0030550">
    <property type="term" value="F:acetylcholine receptor inhibitor activity"/>
    <property type="evidence" value="ECO:0007669"/>
    <property type="project" value="UniProtKB-KW"/>
</dbReference>
<dbReference type="GO" id="GO:0090729">
    <property type="term" value="F:toxin activity"/>
    <property type="evidence" value="ECO:0007669"/>
    <property type="project" value="UniProtKB-KW"/>
</dbReference>
<dbReference type="CDD" id="cd00206">
    <property type="entry name" value="TFP_snake_toxin"/>
    <property type="match status" value="1"/>
</dbReference>
<dbReference type="Gene3D" id="2.10.60.10">
    <property type="entry name" value="CD59"/>
    <property type="match status" value="1"/>
</dbReference>
<dbReference type="InterPro" id="IPR003571">
    <property type="entry name" value="Snake_3FTx"/>
</dbReference>
<dbReference type="InterPro" id="IPR045860">
    <property type="entry name" value="Snake_toxin-like_sf"/>
</dbReference>
<dbReference type="SUPFAM" id="SSF57302">
    <property type="entry name" value="Snake toxin-like"/>
    <property type="match status" value="1"/>
</dbReference>
<organism>
    <name type="scientific">Bungarus multicinctus</name>
    <name type="common">Many-banded krait</name>
    <dbReference type="NCBI Taxonomy" id="8616"/>
    <lineage>
        <taxon>Eukaryota</taxon>
        <taxon>Metazoa</taxon>
        <taxon>Chordata</taxon>
        <taxon>Craniata</taxon>
        <taxon>Vertebrata</taxon>
        <taxon>Euteleostomi</taxon>
        <taxon>Lepidosauria</taxon>
        <taxon>Squamata</taxon>
        <taxon>Bifurcata</taxon>
        <taxon>Unidentata</taxon>
        <taxon>Episquamata</taxon>
        <taxon>Toxicofera</taxon>
        <taxon>Serpentes</taxon>
        <taxon>Colubroidea</taxon>
        <taxon>Elapidae</taxon>
        <taxon>Bungarinae</taxon>
        <taxon>Bungarus</taxon>
    </lineage>
</organism>
<feature type="signal peptide" evidence="2">
    <location>
        <begin position="1"/>
        <end position="21"/>
    </location>
</feature>
<feature type="chain" id="PRO_0000035423" description="Toxin BMLCL" evidence="2">
    <location>
        <begin position="22"/>
        <end position="103"/>
    </location>
</feature>
<feature type="disulfide bond" evidence="1">
    <location>
        <begin position="24"/>
        <end position="45"/>
    </location>
</feature>
<feature type="disulfide bond" evidence="1">
    <location>
        <begin position="27"/>
        <end position="37"/>
    </location>
</feature>
<feature type="disulfide bond" evidence="1">
    <location>
        <begin position="38"/>
        <end position="72"/>
    </location>
</feature>
<feature type="disulfide bond" evidence="1">
    <location>
        <begin position="76"/>
        <end position="90"/>
    </location>
</feature>
<feature type="disulfide bond" evidence="1">
    <location>
        <begin position="91"/>
        <end position="96"/>
    </location>
</feature>
<accession>Q9PW19</accession>
<comment type="function">
    <text evidence="3">Interacts with high efficiency with both neuronal alpha-7/CHRNA7 and muscle type nicotinic acetylcholine receptors (nAChRs). Tested on human alpha-7/CHRNA7 nAChR (IC(50)=42 nM), T.californica muscle receptor (IC(50)=31 nM), L.stagnalis and A.californica acetylcholine-binding proteins (IC(50)=333 nM and 3.4 uM, respectively).</text>
</comment>
<comment type="subcellular location">
    <subcellularLocation>
        <location evidence="2">Secreted</location>
    </subcellularLocation>
</comment>
<comment type="tissue specificity">
    <text evidence="7">Expressed by the venom gland.</text>
</comment>
<comment type="mass spectrometry"/>
<comment type="miscellaneous">
    <text evidence="2">Negative results: does not bind to muscarinic acetylcholine receptors M1 and M2 (CHRM1/CHRM2). Is unable to compete with alpha-bungarotoxin for binding to nAchR at concentrations up to 100 uM. Is not toxic to mice at doses up to 3 mg/kg.</text>
</comment>
<comment type="similarity">
    <text evidence="6">Belongs to the three-finger toxin family. Ancestral subfamily. Orphan group XVII sub-subfamily.</text>
</comment>
<evidence type="ECO:0000250" key="1">
    <source>
        <dbReference type="UniProtKB" id="P81782"/>
    </source>
</evidence>
<evidence type="ECO:0000269" key="2">
    <source>
    </source>
</evidence>
<evidence type="ECO:0000269" key="3">
    <source>
    </source>
</evidence>
<evidence type="ECO:0000303" key="4">
    <source>
    </source>
</evidence>
<evidence type="ECO:0000303" key="5">
    <source>
    </source>
</evidence>
<evidence type="ECO:0000305" key="6"/>
<evidence type="ECO:0000305" key="7">
    <source>
    </source>
</evidence>
<sequence>MKTLLLTLVVVTIICLDLGYTEMCNMCVRPYPFMSSCCPEGQDRCYKSYWVNENGKQEAYHGKYPVILERGCVTACTGPGSGSIYNLYTCCPTNRCGSSSTSG</sequence>